<reference key="1">
    <citation type="journal article" date="2003" name="Nature">
        <title>The DNA sequence of human chromosome 7.</title>
        <authorList>
            <person name="Hillier L.W."/>
            <person name="Fulton R.S."/>
            <person name="Fulton L.A."/>
            <person name="Graves T.A."/>
            <person name="Pepin K.H."/>
            <person name="Wagner-McPherson C."/>
            <person name="Layman D."/>
            <person name="Maas J."/>
            <person name="Jaeger S."/>
            <person name="Walker R."/>
            <person name="Wylie K."/>
            <person name="Sekhon M."/>
            <person name="Becker M.C."/>
            <person name="O'Laughlin M.D."/>
            <person name="Schaller M.E."/>
            <person name="Fewell G.A."/>
            <person name="Delehaunty K.D."/>
            <person name="Miner T.L."/>
            <person name="Nash W.E."/>
            <person name="Cordes M."/>
            <person name="Du H."/>
            <person name="Sun H."/>
            <person name="Edwards J."/>
            <person name="Bradshaw-Cordum H."/>
            <person name="Ali J."/>
            <person name="Andrews S."/>
            <person name="Isak A."/>
            <person name="Vanbrunt A."/>
            <person name="Nguyen C."/>
            <person name="Du F."/>
            <person name="Lamar B."/>
            <person name="Courtney L."/>
            <person name="Kalicki J."/>
            <person name="Ozersky P."/>
            <person name="Bielicki L."/>
            <person name="Scott K."/>
            <person name="Holmes A."/>
            <person name="Harkins R."/>
            <person name="Harris A."/>
            <person name="Strong C.M."/>
            <person name="Hou S."/>
            <person name="Tomlinson C."/>
            <person name="Dauphin-Kohlberg S."/>
            <person name="Kozlowicz-Reilly A."/>
            <person name="Leonard S."/>
            <person name="Rohlfing T."/>
            <person name="Rock S.M."/>
            <person name="Tin-Wollam A.-M."/>
            <person name="Abbott A."/>
            <person name="Minx P."/>
            <person name="Maupin R."/>
            <person name="Strowmatt C."/>
            <person name="Latreille P."/>
            <person name="Miller N."/>
            <person name="Johnson D."/>
            <person name="Murray J."/>
            <person name="Woessner J.P."/>
            <person name="Wendl M.C."/>
            <person name="Yang S.-P."/>
            <person name="Schultz B.R."/>
            <person name="Wallis J.W."/>
            <person name="Spieth J."/>
            <person name="Bieri T.A."/>
            <person name="Nelson J.O."/>
            <person name="Berkowicz N."/>
            <person name="Wohldmann P.E."/>
            <person name="Cook L.L."/>
            <person name="Hickenbotham M.T."/>
            <person name="Eldred J."/>
            <person name="Williams D."/>
            <person name="Bedell J.A."/>
            <person name="Mardis E.R."/>
            <person name="Clifton S.W."/>
            <person name="Chissoe S.L."/>
            <person name="Marra M.A."/>
            <person name="Raymond C."/>
            <person name="Haugen E."/>
            <person name="Gillett W."/>
            <person name="Zhou Y."/>
            <person name="James R."/>
            <person name="Phelps K."/>
            <person name="Iadanoto S."/>
            <person name="Bubb K."/>
            <person name="Simms E."/>
            <person name="Levy R."/>
            <person name="Clendenning J."/>
            <person name="Kaul R."/>
            <person name="Kent W.J."/>
            <person name="Furey T.S."/>
            <person name="Baertsch R.A."/>
            <person name="Brent M.R."/>
            <person name="Keibler E."/>
            <person name="Flicek P."/>
            <person name="Bork P."/>
            <person name="Suyama M."/>
            <person name="Bailey J.A."/>
            <person name="Portnoy M.E."/>
            <person name="Torrents D."/>
            <person name="Chinwalla A.T."/>
            <person name="Gish W.R."/>
            <person name="Eddy S.R."/>
            <person name="McPherson J.D."/>
            <person name="Olson M.V."/>
            <person name="Eichler E.E."/>
            <person name="Green E.D."/>
            <person name="Waterston R.H."/>
            <person name="Wilson R.K."/>
        </authorList>
    </citation>
    <scope>NUCLEOTIDE SEQUENCE [LARGE SCALE GENOMIC DNA]</scope>
</reference>
<evidence type="ECO:0000256" key="1">
    <source>
        <dbReference type="SAM" id="MobiDB-lite"/>
    </source>
</evidence>
<evidence type="ECO:0000305" key="2"/>
<evidence type="ECO:0000312" key="3">
    <source>
        <dbReference type="HGNC" id="HGNC:51510"/>
    </source>
</evidence>
<name>SPD14_HUMAN</name>
<sequence>MGQILGKIMMSHQPQPQEERSPQRSTSGYPLQEVVDDEVLGPSAPGVDPSPPRRSLGWKRKRECLDESDDEPEKELAPEPEETWVAETLCGLKMKAKRRRVSLVLPEYYEAFNRLLEDPVIKRLLAWDKDLRVSDKYLLAMVIAYFSRAGLPSWQYQRIHFFLALYLANDMEEDDEAPKQNIFYFLYEETRSHIPLLSELWFQLCRYMNPRARKNCSQIALFRKYRFHFFCSMRCRAWVSLEELEEIQAYDPEHWVWARDRAHLS</sequence>
<comment type="similarity">
    <text evidence="2">Belongs to the Speedy/Ringo family.</text>
</comment>
<accession>P0DUD3</accession>
<feature type="chain" id="PRO_0000451621" description="Speedy protein E14">
    <location>
        <begin position="1"/>
        <end position="265"/>
    </location>
</feature>
<feature type="region of interest" description="Disordered" evidence="1">
    <location>
        <begin position="1"/>
        <end position="80"/>
    </location>
</feature>
<feature type="compositionally biased region" description="Acidic residues" evidence="1">
    <location>
        <begin position="66"/>
        <end position="80"/>
    </location>
</feature>
<keyword id="KW-1185">Reference proteome</keyword>
<proteinExistence type="inferred from homology"/>
<organism>
    <name type="scientific">Homo sapiens</name>
    <name type="common">Human</name>
    <dbReference type="NCBI Taxonomy" id="9606"/>
    <lineage>
        <taxon>Eukaryota</taxon>
        <taxon>Metazoa</taxon>
        <taxon>Chordata</taxon>
        <taxon>Craniata</taxon>
        <taxon>Vertebrata</taxon>
        <taxon>Euteleostomi</taxon>
        <taxon>Mammalia</taxon>
        <taxon>Eutheria</taxon>
        <taxon>Euarchontoglires</taxon>
        <taxon>Primates</taxon>
        <taxon>Haplorrhini</taxon>
        <taxon>Catarrhini</taxon>
        <taxon>Hominidae</taxon>
        <taxon>Homo</taxon>
    </lineage>
</organism>
<gene>
    <name evidence="3" type="primary">SPDYE14</name>
</gene>
<protein>
    <recommendedName>
        <fullName evidence="2">Speedy protein E14</fullName>
    </recommendedName>
</protein>
<dbReference type="EMBL" id="AC211486">
    <property type="status" value="NOT_ANNOTATED_CDS"/>
    <property type="molecule type" value="Genomic_DNA"/>
</dbReference>
<dbReference type="CCDS" id="CCDS94126.1"/>
<dbReference type="RefSeq" id="NP_001369423.1">
    <property type="nucleotide sequence ID" value="NM_001382494.2"/>
</dbReference>
<dbReference type="RefSeq" id="NP_001369424.1">
    <property type="nucleotide sequence ID" value="NM_001382495.2"/>
</dbReference>
<dbReference type="RefSeq" id="NP_001381869.1">
    <property type="nucleotide sequence ID" value="NM_001394940.1"/>
</dbReference>
<dbReference type="RefSeq" id="XP_047276652.1">
    <property type="nucleotide sequence ID" value="XM_047420696.1"/>
</dbReference>
<dbReference type="SMR" id="P0DUD3"/>
<dbReference type="MassIVE" id="P0DUD3"/>
<dbReference type="Ensembl" id="ENST00000651045.3">
    <property type="protein sequence ID" value="ENSP00000498497.1"/>
    <property type="gene ID" value="ENSG00000286137.3"/>
</dbReference>
<dbReference type="GeneID" id="641776"/>
<dbReference type="MANE-Select" id="ENST00000651045.3">
    <property type="protein sequence ID" value="ENSP00000498497.1"/>
    <property type="RefSeq nucleotide sequence ID" value="NM_001394940.1"/>
    <property type="RefSeq protein sequence ID" value="NP_001381869.1"/>
</dbReference>
<dbReference type="AGR" id="HGNC:51510"/>
<dbReference type="GeneCards" id="SPDYE14"/>
<dbReference type="HGNC" id="HGNC:51510">
    <property type="gene designation" value="SPDYE14"/>
</dbReference>
<dbReference type="HPA" id="ENSG00000286137">
    <property type="expression patterns" value="Not detected"/>
</dbReference>
<dbReference type="neXtProt" id="NX_P0DUD3"/>
<dbReference type="InParanoid" id="P0DUD3"/>
<dbReference type="OMA" id="WENKLTI"/>
<dbReference type="Proteomes" id="UP000005640">
    <property type="component" value="Chromosome 7"/>
</dbReference>
<dbReference type="GO" id="GO:0019901">
    <property type="term" value="F:protein kinase binding"/>
    <property type="evidence" value="ECO:0000318"/>
    <property type="project" value="GO_Central"/>
</dbReference>
<dbReference type="InterPro" id="IPR020984">
    <property type="entry name" value="Speedy"/>
</dbReference>
<dbReference type="PANTHER" id="PTHR31156">
    <property type="entry name" value="WBSCR19-LIKE PROTEIN"/>
    <property type="match status" value="1"/>
</dbReference>
<dbReference type="Pfam" id="PF11357">
    <property type="entry name" value="Spy1"/>
    <property type="match status" value="1"/>
</dbReference>